<gene>
    <name evidence="1" type="primary">sstT</name>
    <name type="ordered locus">SSU05_1463</name>
</gene>
<protein>
    <recommendedName>
        <fullName evidence="1">Serine/threonine transporter SstT</fullName>
    </recommendedName>
    <alternativeName>
        <fullName evidence="1">Na(+)/serine-threonine symporter</fullName>
    </alternativeName>
</protein>
<name>SSTT_STRSY</name>
<sequence>MNKIISVWKKMNLIRKIGIGVVLGVLLGLIAPKITVIALFGSLFVGALKAIAPLLVLTLVAHALSQAPAGQKSNMRTVICLYLFGTFAAAFIAVGASYLFPIKLVLSTTTTTDITPPQGIAEVFQDLLLKVVDNPINALATANYIGVLTWAAVFGLAFRHASKTTKDLLQSTAEVISKVVGWIIGLAPFGIMGLVFDTIANNGLTALKDYGLLLLLLVGSMIFVALVVNPLIAFLVMKKNPYPLVFECLRVSGVTAFFTRSSAANIPVNMQLCKRLGVDPDTYSVSIPLGATINMAGAAITINILTMAAVHTLGISVDFSSALLLSVVASLSAAGASGVAGGSLLLIPVACSLFVVPYVV</sequence>
<keyword id="KW-0029">Amino-acid transport</keyword>
<keyword id="KW-1003">Cell membrane</keyword>
<keyword id="KW-0472">Membrane</keyword>
<keyword id="KW-0769">Symport</keyword>
<keyword id="KW-0812">Transmembrane</keyword>
<keyword id="KW-1133">Transmembrane helix</keyword>
<keyword id="KW-0813">Transport</keyword>
<evidence type="ECO:0000255" key="1">
    <source>
        <dbReference type="HAMAP-Rule" id="MF_01582"/>
    </source>
</evidence>
<accession>A4VWE0</accession>
<dbReference type="EMBL" id="CP000407">
    <property type="protein sequence ID" value="ABP90429.1"/>
    <property type="molecule type" value="Genomic_DNA"/>
</dbReference>
<dbReference type="SMR" id="A4VWE0"/>
<dbReference type="STRING" id="391295.SSU05_1463"/>
<dbReference type="KEGG" id="ssu:SSU05_1463"/>
<dbReference type="eggNOG" id="COG3633">
    <property type="taxonomic scope" value="Bacteria"/>
</dbReference>
<dbReference type="HOGENOM" id="CLU_044581_0_0_9"/>
<dbReference type="GO" id="GO:0005886">
    <property type="term" value="C:plasma membrane"/>
    <property type="evidence" value="ECO:0007669"/>
    <property type="project" value="UniProtKB-SubCell"/>
</dbReference>
<dbReference type="GO" id="GO:0005295">
    <property type="term" value="F:neutral L-amino acid:sodium symporter activity"/>
    <property type="evidence" value="ECO:0007669"/>
    <property type="project" value="TreeGrafter"/>
</dbReference>
<dbReference type="GO" id="GO:0032329">
    <property type="term" value="P:serine transport"/>
    <property type="evidence" value="ECO:0007669"/>
    <property type="project" value="InterPro"/>
</dbReference>
<dbReference type="GO" id="GO:0015826">
    <property type="term" value="P:threonine transport"/>
    <property type="evidence" value="ECO:0007669"/>
    <property type="project" value="InterPro"/>
</dbReference>
<dbReference type="Gene3D" id="1.10.3860.10">
    <property type="entry name" value="Sodium:dicarboxylate symporter"/>
    <property type="match status" value="1"/>
</dbReference>
<dbReference type="HAMAP" id="MF_01582">
    <property type="entry name" value="Ser_Thr_transp_SstT"/>
    <property type="match status" value="1"/>
</dbReference>
<dbReference type="InterPro" id="IPR001991">
    <property type="entry name" value="Na-dicarboxylate_symporter"/>
</dbReference>
<dbReference type="InterPro" id="IPR036458">
    <property type="entry name" value="Na:dicarbo_symporter_sf"/>
</dbReference>
<dbReference type="InterPro" id="IPR023025">
    <property type="entry name" value="Ser_Thr_transp_SstT"/>
</dbReference>
<dbReference type="NCBIfam" id="NF010151">
    <property type="entry name" value="PRK13628.1"/>
    <property type="match status" value="1"/>
</dbReference>
<dbReference type="PANTHER" id="PTHR42865">
    <property type="entry name" value="PROTON/GLUTAMATE-ASPARTATE SYMPORTER"/>
    <property type="match status" value="1"/>
</dbReference>
<dbReference type="PANTHER" id="PTHR42865:SF8">
    <property type="entry name" value="SERINE_THREONINE TRANSPORTER SSTT"/>
    <property type="match status" value="1"/>
</dbReference>
<dbReference type="Pfam" id="PF00375">
    <property type="entry name" value="SDF"/>
    <property type="match status" value="1"/>
</dbReference>
<dbReference type="PRINTS" id="PR00173">
    <property type="entry name" value="EDTRNSPORT"/>
</dbReference>
<dbReference type="SUPFAM" id="SSF118215">
    <property type="entry name" value="Proton glutamate symport protein"/>
    <property type="match status" value="1"/>
</dbReference>
<organism>
    <name type="scientific">Streptococcus suis (strain 05ZYH33)</name>
    <dbReference type="NCBI Taxonomy" id="391295"/>
    <lineage>
        <taxon>Bacteria</taxon>
        <taxon>Bacillati</taxon>
        <taxon>Bacillota</taxon>
        <taxon>Bacilli</taxon>
        <taxon>Lactobacillales</taxon>
        <taxon>Streptococcaceae</taxon>
        <taxon>Streptococcus</taxon>
    </lineage>
</organism>
<reference key="1">
    <citation type="journal article" date="2007" name="PLoS ONE">
        <title>A glimpse of streptococcal toxic shock syndrome from comparative genomics of S. suis 2 Chinese isolates.</title>
        <authorList>
            <person name="Chen C."/>
            <person name="Tang J."/>
            <person name="Dong W."/>
            <person name="Wang C."/>
            <person name="Feng Y."/>
            <person name="Wang J."/>
            <person name="Zheng F."/>
            <person name="Pan X."/>
            <person name="Liu D."/>
            <person name="Li M."/>
            <person name="Song Y."/>
            <person name="Zhu X."/>
            <person name="Sun H."/>
            <person name="Feng T."/>
            <person name="Guo Z."/>
            <person name="Ju A."/>
            <person name="Ge J."/>
            <person name="Dong Y."/>
            <person name="Sun W."/>
            <person name="Jiang Y."/>
            <person name="Wang J."/>
            <person name="Yan J."/>
            <person name="Yang H."/>
            <person name="Wang X."/>
            <person name="Gao G.F."/>
            <person name="Yang R."/>
            <person name="Wang J."/>
            <person name="Yu J."/>
        </authorList>
    </citation>
    <scope>NUCLEOTIDE SEQUENCE [LARGE SCALE GENOMIC DNA]</scope>
    <source>
        <strain>05ZYH33</strain>
    </source>
</reference>
<proteinExistence type="inferred from homology"/>
<feature type="chain" id="PRO_0000309147" description="Serine/threonine transporter SstT">
    <location>
        <begin position="1"/>
        <end position="360"/>
    </location>
</feature>
<feature type="transmembrane region" description="Helical" evidence="1">
    <location>
        <begin position="17"/>
        <end position="37"/>
    </location>
</feature>
<feature type="transmembrane region" description="Helical" evidence="1">
    <location>
        <begin position="40"/>
        <end position="60"/>
    </location>
</feature>
<feature type="transmembrane region" description="Helical" evidence="1">
    <location>
        <begin position="78"/>
        <end position="98"/>
    </location>
</feature>
<feature type="transmembrane region" description="Helical" evidence="1">
    <location>
        <begin position="138"/>
        <end position="158"/>
    </location>
</feature>
<feature type="transmembrane region" description="Helical" evidence="1">
    <location>
        <begin position="179"/>
        <end position="199"/>
    </location>
</feature>
<feature type="transmembrane region" description="Helical" evidence="1">
    <location>
        <begin position="212"/>
        <end position="232"/>
    </location>
</feature>
<feature type="transmembrane region" description="Helical" evidence="1">
    <location>
        <begin position="295"/>
        <end position="315"/>
    </location>
</feature>
<feature type="transmembrane region" description="Helical" evidence="1">
    <location>
        <begin position="316"/>
        <end position="336"/>
    </location>
</feature>
<feature type="transmembrane region" description="Helical" evidence="1">
    <location>
        <begin position="339"/>
        <end position="359"/>
    </location>
</feature>
<comment type="function">
    <text evidence="1">Involved in the import of serine and threonine into the cell, with the concomitant import of sodium (symport system).</text>
</comment>
<comment type="catalytic activity">
    <reaction evidence="1">
        <text>L-serine(in) + Na(+)(in) = L-serine(out) + Na(+)(out)</text>
        <dbReference type="Rhea" id="RHEA:29575"/>
        <dbReference type="ChEBI" id="CHEBI:29101"/>
        <dbReference type="ChEBI" id="CHEBI:33384"/>
    </reaction>
    <physiologicalReaction direction="right-to-left" evidence="1">
        <dbReference type="Rhea" id="RHEA:29577"/>
    </physiologicalReaction>
</comment>
<comment type="catalytic activity">
    <reaction evidence="1">
        <text>L-threonine(in) + Na(+)(in) = L-threonine(out) + Na(+)(out)</text>
        <dbReference type="Rhea" id="RHEA:69999"/>
        <dbReference type="ChEBI" id="CHEBI:29101"/>
        <dbReference type="ChEBI" id="CHEBI:57926"/>
    </reaction>
    <physiologicalReaction direction="right-to-left" evidence="1">
        <dbReference type="Rhea" id="RHEA:70001"/>
    </physiologicalReaction>
</comment>
<comment type="subcellular location">
    <subcellularLocation>
        <location evidence="1">Cell membrane</location>
        <topology evidence="1">Multi-pass membrane protein</topology>
    </subcellularLocation>
</comment>
<comment type="similarity">
    <text evidence="1">Belongs to the dicarboxylate/amino acid:cation symporter (DAACS) (TC 2.A.23) family.</text>
</comment>